<dbReference type="EC" id="7.-.-.-"/>
<dbReference type="EMBL" id="AE017198">
    <property type="protein sequence ID" value="AAS09477.1"/>
    <property type="molecule type" value="Genomic_DNA"/>
</dbReference>
<dbReference type="RefSeq" id="WP_011162384.1">
    <property type="nucleotide sequence ID" value="NC_005362.1"/>
</dbReference>
<dbReference type="SMR" id="Q74I62"/>
<dbReference type="TCDB" id="3.A.1.29.1">
    <property type="family name" value="the atp-binding cassette (abc) superfamily"/>
</dbReference>
<dbReference type="KEGG" id="ljo:LJ_1704"/>
<dbReference type="PATRIC" id="fig|257314.6.peg.1529"/>
<dbReference type="eggNOG" id="COG1122">
    <property type="taxonomic scope" value="Bacteria"/>
</dbReference>
<dbReference type="HOGENOM" id="CLU_000604_86_7_9"/>
<dbReference type="Proteomes" id="UP000000581">
    <property type="component" value="Chromosome"/>
</dbReference>
<dbReference type="GO" id="GO:0043190">
    <property type="term" value="C:ATP-binding cassette (ABC) transporter complex"/>
    <property type="evidence" value="ECO:0007669"/>
    <property type="project" value="TreeGrafter"/>
</dbReference>
<dbReference type="GO" id="GO:0005524">
    <property type="term" value="F:ATP binding"/>
    <property type="evidence" value="ECO:0007669"/>
    <property type="project" value="UniProtKB-KW"/>
</dbReference>
<dbReference type="GO" id="GO:0016887">
    <property type="term" value="F:ATP hydrolysis activity"/>
    <property type="evidence" value="ECO:0007669"/>
    <property type="project" value="InterPro"/>
</dbReference>
<dbReference type="GO" id="GO:0042626">
    <property type="term" value="F:ATPase-coupled transmembrane transporter activity"/>
    <property type="evidence" value="ECO:0007669"/>
    <property type="project" value="TreeGrafter"/>
</dbReference>
<dbReference type="CDD" id="cd03225">
    <property type="entry name" value="ABC_cobalt_CbiO_domain1"/>
    <property type="match status" value="2"/>
</dbReference>
<dbReference type="FunFam" id="3.40.50.300:FF:001422">
    <property type="entry name" value="Cobalt ABC transporter ATP-binding protein"/>
    <property type="match status" value="1"/>
</dbReference>
<dbReference type="FunFam" id="3.40.50.300:FF:000224">
    <property type="entry name" value="Energy-coupling factor transporter ATP-binding protein EcfA"/>
    <property type="match status" value="1"/>
</dbReference>
<dbReference type="Gene3D" id="3.40.50.300">
    <property type="entry name" value="P-loop containing nucleotide triphosphate hydrolases"/>
    <property type="match status" value="2"/>
</dbReference>
<dbReference type="InterPro" id="IPR003593">
    <property type="entry name" value="AAA+_ATPase"/>
</dbReference>
<dbReference type="InterPro" id="IPR022216">
    <property type="entry name" value="ABC_Co_transporter"/>
</dbReference>
<dbReference type="InterPro" id="IPR003439">
    <property type="entry name" value="ABC_transporter-like_ATP-bd"/>
</dbReference>
<dbReference type="InterPro" id="IPR017871">
    <property type="entry name" value="ABC_transporter-like_CS"/>
</dbReference>
<dbReference type="InterPro" id="IPR015856">
    <property type="entry name" value="ABC_transpr_CbiO/EcfA_su"/>
</dbReference>
<dbReference type="InterPro" id="IPR050095">
    <property type="entry name" value="ECF_ABC_transporter_ATP-bd"/>
</dbReference>
<dbReference type="InterPro" id="IPR027417">
    <property type="entry name" value="P-loop_NTPase"/>
</dbReference>
<dbReference type="NCBIfam" id="NF010167">
    <property type="entry name" value="PRK13648.1"/>
    <property type="match status" value="2"/>
</dbReference>
<dbReference type="PANTHER" id="PTHR43553:SF26">
    <property type="entry name" value="ABC TRANSPORTER ATP-BINDING PROTEIN BC_2655-RELATED"/>
    <property type="match status" value="1"/>
</dbReference>
<dbReference type="PANTHER" id="PTHR43553">
    <property type="entry name" value="HEAVY METAL TRANSPORTER"/>
    <property type="match status" value="1"/>
</dbReference>
<dbReference type="Pfam" id="PF00005">
    <property type="entry name" value="ABC_tran"/>
    <property type="match status" value="2"/>
</dbReference>
<dbReference type="Pfam" id="PF12558">
    <property type="entry name" value="DUF3744"/>
    <property type="match status" value="1"/>
</dbReference>
<dbReference type="SMART" id="SM00382">
    <property type="entry name" value="AAA"/>
    <property type="match status" value="2"/>
</dbReference>
<dbReference type="SUPFAM" id="SSF52540">
    <property type="entry name" value="P-loop containing nucleoside triphosphate hydrolases"/>
    <property type="match status" value="2"/>
</dbReference>
<dbReference type="PROSITE" id="PS00211">
    <property type="entry name" value="ABC_TRANSPORTER_1"/>
    <property type="match status" value="1"/>
</dbReference>
<dbReference type="PROSITE" id="PS50893">
    <property type="entry name" value="ABC_TRANSPORTER_2"/>
    <property type="match status" value="2"/>
</dbReference>
<gene>
    <name type="ordered locus">LJ_1704</name>
</gene>
<proteinExistence type="inferred from homology"/>
<accession>Q74I62</accession>
<keyword id="KW-0067">ATP-binding</keyword>
<keyword id="KW-1003">Cell membrane</keyword>
<keyword id="KW-0472">Membrane</keyword>
<keyword id="KW-0547">Nucleotide-binding</keyword>
<keyword id="KW-0677">Repeat</keyword>
<keyword id="KW-1278">Translocase</keyword>
<keyword id="KW-0813">Transport</keyword>
<comment type="function">
    <text evidence="1">Probably part of an ABC transporter complex. Responsible for energy coupling to the transport system (By similarity).</text>
</comment>
<comment type="subcellular location">
    <subcellularLocation>
        <location evidence="1">Cell membrane</location>
        <topology evidence="1">Peripheral membrane protein</topology>
    </subcellularLocation>
</comment>
<comment type="similarity">
    <text evidence="3">Belongs to the ABC transporter superfamily.</text>
</comment>
<reference key="1">
    <citation type="journal article" date="2004" name="Proc. Natl. Acad. Sci. U.S.A.">
        <title>The genome sequence of the probiotic intestinal bacterium Lactobacillus johnsonii NCC 533.</title>
        <authorList>
            <person name="Pridmore R.D."/>
            <person name="Berger B."/>
            <person name="Desiere F."/>
            <person name="Vilanova D."/>
            <person name="Barretto C."/>
            <person name="Pittet A.-C."/>
            <person name="Zwahlen M.-C."/>
            <person name="Rouvet M."/>
            <person name="Altermann E."/>
            <person name="Barrangou R."/>
            <person name="Mollet B."/>
            <person name="Mercenier A."/>
            <person name="Klaenhammer T."/>
            <person name="Arigoni F."/>
            <person name="Schell M.A."/>
        </authorList>
    </citation>
    <scope>NUCLEOTIDE SEQUENCE [LARGE SCALE GENOMIC DNA]</scope>
    <source>
        <strain>CNCM I-1225 / La1 / NCC 533</strain>
    </source>
</reference>
<protein>
    <recommendedName>
        <fullName>Putative ABC transporter ATP-binding protein LJ_1704</fullName>
        <ecNumber>7.-.-.-</ecNumber>
    </recommendedName>
</protein>
<organism>
    <name type="scientific">Lactobacillus johnsonii (strain CNCM I-12250 / La1 / NCC 533)</name>
    <dbReference type="NCBI Taxonomy" id="257314"/>
    <lineage>
        <taxon>Bacteria</taxon>
        <taxon>Bacillati</taxon>
        <taxon>Bacillota</taxon>
        <taxon>Bacilli</taxon>
        <taxon>Lactobacillales</taxon>
        <taxon>Lactobacillaceae</taxon>
        <taxon>Lactobacillus</taxon>
    </lineage>
</organism>
<sequence>MTEPIIEFKDFSFKYNSQAEPTLKNINLKINKGEKILLAGPSGSGKSTIGRCLNGLIPNIDQGEVKGKCLVNGKDITSTSLFDFSFTTSTILQDADSQFIGLTVGEDIAFALENDCQPKDKMHQTVNQWANELKIKELLTQSPQSLSGGQKQIVALAGVLVDESPILLFDEPLANLDPASGLKTMAIIDKIQKELNATVIIIEHRVEEVLSQLIDRIILVNEGTIVADQPTNQLLHSNTLEKIGVREPLYLKALTAADVNLSSIKEVDQISTLPVSEKISDKLAAWTKQAKITKKEVDNLPLLKLDHVGHQYSKNQPYPLKDVSTTINQGDFISIVGQNGAGKTTLCRTICGFISNEGKITLKDQNLSDLSIKERAEKIGYVMQDPNQMISQKMIFDEIALGLRLRNVDEETIKQKVDQTLKICGLYPFRHWPISALSFGQKKRVTIAAILVLEPEIIILDEPTAGQDWKTYTEIMSFLKHLNTMGKTIIIITHDMHLMLEYTSRSLAFAKGKLIADTTPIELLTNQALIKEASLKRTSLYDLAKHYNLPDPNKFVQAYINFEQQNWKDEDYE</sequence>
<name>Y1704_LACJO</name>
<evidence type="ECO:0000250" key="1"/>
<evidence type="ECO:0000255" key="2">
    <source>
        <dbReference type="PROSITE-ProRule" id="PRU00434"/>
    </source>
</evidence>
<evidence type="ECO:0000305" key="3"/>
<feature type="chain" id="PRO_0000092018" description="Putative ABC transporter ATP-binding protein LJ_1704">
    <location>
        <begin position="1"/>
        <end position="573"/>
    </location>
</feature>
<feature type="domain" description="ABC transporter 1" evidence="2">
    <location>
        <begin position="6"/>
        <end position="247"/>
    </location>
</feature>
<feature type="domain" description="ABC transporter 2" evidence="2">
    <location>
        <begin position="303"/>
        <end position="536"/>
    </location>
</feature>
<feature type="binding site" evidence="2">
    <location>
        <begin position="40"/>
        <end position="47"/>
    </location>
    <ligand>
        <name>ATP</name>
        <dbReference type="ChEBI" id="CHEBI:30616"/>
        <label>1</label>
    </ligand>
</feature>
<feature type="binding site" evidence="2">
    <location>
        <begin position="337"/>
        <end position="344"/>
    </location>
    <ligand>
        <name>ATP</name>
        <dbReference type="ChEBI" id="CHEBI:30616"/>
        <label>2</label>
    </ligand>
</feature>